<organism>
    <name type="scientific">Escherichia coli (strain K12)</name>
    <dbReference type="NCBI Taxonomy" id="83333"/>
    <lineage>
        <taxon>Bacteria</taxon>
        <taxon>Pseudomonadati</taxon>
        <taxon>Pseudomonadota</taxon>
        <taxon>Gammaproteobacteria</taxon>
        <taxon>Enterobacterales</taxon>
        <taxon>Enterobacteriaceae</taxon>
        <taxon>Escherichia</taxon>
    </lineage>
</organism>
<gene>
    <name type="primary">msrC</name>
    <name type="synonym">yebR</name>
    <name type="ordered locus">b1832</name>
    <name type="ordered locus">JW1821</name>
</gene>
<evidence type="ECO:0000269" key="1">
    <source>
    </source>
</evidence>
<evidence type="ECO:0000305" key="2"/>
<evidence type="ECO:0007829" key="3">
    <source>
        <dbReference type="PDB" id="1VHM"/>
    </source>
</evidence>
<sequence>MNKTEFYADLNRDFNALMAGETSFLATLANTSALLYERLTDINWAGFYLLEDDTLVLGPFQGKIACVRIPVGRGVCGTAVARNQVQRIEDVHVFDGHIACDAASNSEIVLPLVVKNQIIGVLDIDSTVFGRFTDEDEQGLRQLVAQLEKVLATTDYKKFFASVAG</sequence>
<name>MSRC_ECOLI</name>
<comment type="function">
    <text evidence="1">Catalyzes the reversible oxidation-reduction of the R-enantiomer of free methionine sulfoxide to methionine. Specific for free L-methionine-(R)-S-oxide.</text>
</comment>
<comment type="catalytic activity">
    <reaction evidence="1">
        <text>[thioredoxin]-disulfide + L-methionine + H2O = L-methionine (R)-S-oxide + [thioredoxin]-dithiol</text>
        <dbReference type="Rhea" id="RHEA:21260"/>
        <dbReference type="Rhea" id="RHEA-COMP:10698"/>
        <dbReference type="Rhea" id="RHEA-COMP:10700"/>
        <dbReference type="ChEBI" id="CHEBI:15377"/>
        <dbReference type="ChEBI" id="CHEBI:29950"/>
        <dbReference type="ChEBI" id="CHEBI:50058"/>
        <dbReference type="ChEBI" id="CHEBI:57844"/>
        <dbReference type="ChEBI" id="CHEBI:58773"/>
        <dbReference type="EC" id="1.8.4.14"/>
    </reaction>
</comment>
<comment type="biophysicochemical properties">
    <kinetics>
        <KM evidence="1">3.9 mM for L-methionine-(R)-S-oxide</KM>
        <KM evidence="1">9.8 uM for thioredoxin</KM>
    </kinetics>
</comment>
<comment type="similarity">
    <text evidence="2">Belongs to the free Met sulfoxide reductase family.</text>
</comment>
<comment type="sequence caution" evidence="2">
    <conflict type="erroneous initiation">
        <sequence resource="EMBL-CDS" id="BAA15640"/>
    </conflict>
    <text>Extended N-terminus.</text>
</comment>
<dbReference type="EC" id="1.8.4.14"/>
<dbReference type="EMBL" id="U00096">
    <property type="protein sequence ID" value="AAC74902.2"/>
    <property type="molecule type" value="Genomic_DNA"/>
</dbReference>
<dbReference type="EMBL" id="AP009048">
    <property type="protein sequence ID" value="BAA15640.1"/>
    <property type="status" value="ALT_INIT"/>
    <property type="molecule type" value="Genomic_DNA"/>
</dbReference>
<dbReference type="PIR" id="H64944">
    <property type="entry name" value="H64944"/>
</dbReference>
<dbReference type="RefSeq" id="NP_416346.4">
    <property type="nucleotide sequence ID" value="NC_000913.3"/>
</dbReference>
<dbReference type="RefSeq" id="WP_001043877.1">
    <property type="nucleotide sequence ID" value="NZ_LN832404.1"/>
</dbReference>
<dbReference type="PDB" id="1VHM">
    <property type="method" value="X-ray"/>
    <property type="resolution" value="2.10 A"/>
    <property type="chains" value="A/B=1-165"/>
</dbReference>
<dbReference type="PDBsum" id="1VHM"/>
<dbReference type="SMR" id="P76270"/>
<dbReference type="BioGRID" id="4259156">
    <property type="interactions" value="30"/>
</dbReference>
<dbReference type="DIP" id="DIP-11813N"/>
<dbReference type="FunCoup" id="P76270">
    <property type="interactions" value="324"/>
</dbReference>
<dbReference type="IntAct" id="P76270">
    <property type="interactions" value="8"/>
</dbReference>
<dbReference type="STRING" id="511145.b1832"/>
<dbReference type="DrugBank" id="DB03814">
    <property type="generic name" value="2-(N-morpholino)ethanesulfonic acid"/>
</dbReference>
<dbReference type="jPOST" id="P76270"/>
<dbReference type="PaxDb" id="511145-b1832"/>
<dbReference type="EnsemblBacteria" id="AAC74902">
    <property type="protein sequence ID" value="AAC74902"/>
    <property type="gene ID" value="b1832"/>
</dbReference>
<dbReference type="GeneID" id="946086"/>
<dbReference type="KEGG" id="ecj:JW1821"/>
<dbReference type="KEGG" id="eco:b1832"/>
<dbReference type="KEGG" id="ecoc:C3026_10440"/>
<dbReference type="PATRIC" id="fig|511145.12.peg.1910"/>
<dbReference type="EchoBASE" id="EB3774"/>
<dbReference type="eggNOG" id="COG1956">
    <property type="taxonomic scope" value="Bacteria"/>
</dbReference>
<dbReference type="HOGENOM" id="CLU_077738_2_0_6"/>
<dbReference type="InParanoid" id="P76270"/>
<dbReference type="OrthoDB" id="9796252at2"/>
<dbReference type="PhylomeDB" id="P76270"/>
<dbReference type="BioCyc" id="EcoCyc:G7005-MONOMER"/>
<dbReference type="BioCyc" id="MetaCyc:G7005-MONOMER"/>
<dbReference type="BRENDA" id="1.8.4.14">
    <property type="organism ID" value="2026"/>
</dbReference>
<dbReference type="SABIO-RK" id="P76270"/>
<dbReference type="EvolutionaryTrace" id="P76270"/>
<dbReference type="PRO" id="PR:P76270"/>
<dbReference type="Proteomes" id="UP000000625">
    <property type="component" value="Chromosome"/>
</dbReference>
<dbReference type="GO" id="GO:0005829">
    <property type="term" value="C:cytosol"/>
    <property type="evidence" value="ECO:0000314"/>
    <property type="project" value="EcoCyc"/>
</dbReference>
<dbReference type="GO" id="GO:0033745">
    <property type="term" value="F:L-methionine-(R)-S-oxide reductase activity"/>
    <property type="evidence" value="ECO:0000314"/>
    <property type="project" value="EcoCyc"/>
</dbReference>
<dbReference type="GO" id="GO:0042803">
    <property type="term" value="F:protein homodimerization activity"/>
    <property type="evidence" value="ECO:0000314"/>
    <property type="project" value="EcoCyc"/>
</dbReference>
<dbReference type="FunFam" id="3.30.450.40:FF:000008">
    <property type="entry name" value="GAF domain-containing proteins"/>
    <property type="match status" value="1"/>
</dbReference>
<dbReference type="Gene3D" id="3.30.450.40">
    <property type="match status" value="1"/>
</dbReference>
<dbReference type="InterPro" id="IPR000614">
    <property type="entry name" value="FRMsr_CS"/>
</dbReference>
<dbReference type="InterPro" id="IPR003018">
    <property type="entry name" value="GAF"/>
</dbReference>
<dbReference type="InterPro" id="IPR029016">
    <property type="entry name" value="GAF-like_dom_sf"/>
</dbReference>
<dbReference type="InterPro" id="IPR051330">
    <property type="entry name" value="Phosphatase_reg/MetRdx"/>
</dbReference>
<dbReference type="PANTHER" id="PTHR21021:SF15">
    <property type="entry name" value="FREE METHIONINE-R-SULFOXIDE REDUCTASE"/>
    <property type="match status" value="1"/>
</dbReference>
<dbReference type="PANTHER" id="PTHR21021">
    <property type="entry name" value="GAF/PUTATIVE CYTOSKELETAL PROTEIN"/>
    <property type="match status" value="1"/>
</dbReference>
<dbReference type="Pfam" id="PF13185">
    <property type="entry name" value="GAF_2"/>
    <property type="match status" value="1"/>
</dbReference>
<dbReference type="SMART" id="SM00065">
    <property type="entry name" value="GAF"/>
    <property type="match status" value="1"/>
</dbReference>
<dbReference type="SUPFAM" id="SSF55781">
    <property type="entry name" value="GAF domain-like"/>
    <property type="match status" value="1"/>
</dbReference>
<dbReference type="PROSITE" id="PS01320">
    <property type="entry name" value="UPF0067"/>
    <property type="match status" value="1"/>
</dbReference>
<protein>
    <recommendedName>
        <fullName>Free methionine-R-sulfoxide reductase</fullName>
        <shortName>fRMsr</shortName>
        <ecNumber>1.8.4.14</ecNumber>
    </recommendedName>
</protein>
<keyword id="KW-0002">3D-structure</keyword>
<keyword id="KW-0560">Oxidoreductase</keyword>
<keyword id="KW-1185">Reference proteome</keyword>
<proteinExistence type="evidence at protein level"/>
<feature type="chain" id="PRO_0000171553" description="Free methionine-R-sulfoxide reductase">
    <location>
        <begin position="1"/>
        <end position="165"/>
    </location>
</feature>
<feature type="domain" description="GAF">
    <location>
        <begin position="49"/>
        <end position="149"/>
    </location>
</feature>
<feature type="helix" evidence="3">
    <location>
        <begin position="3"/>
        <end position="18"/>
    </location>
</feature>
<feature type="helix" evidence="3">
    <location>
        <begin position="24"/>
        <end position="38"/>
    </location>
</feature>
<feature type="strand" evidence="3">
    <location>
        <begin position="39"/>
        <end position="41"/>
    </location>
</feature>
<feature type="strand" evidence="3">
    <location>
        <begin position="43"/>
        <end position="51"/>
    </location>
</feature>
<feature type="strand" evidence="3">
    <location>
        <begin position="54"/>
        <end position="63"/>
    </location>
</feature>
<feature type="strand" evidence="3">
    <location>
        <begin position="67"/>
        <end position="70"/>
    </location>
</feature>
<feature type="helix" evidence="3">
    <location>
        <begin position="74"/>
        <end position="82"/>
    </location>
</feature>
<feature type="strand" evidence="3">
    <location>
        <begin position="86"/>
        <end position="89"/>
    </location>
</feature>
<feature type="turn" evidence="3">
    <location>
        <begin position="91"/>
        <end position="93"/>
    </location>
</feature>
<feature type="strand" evidence="3">
    <location>
        <begin position="105"/>
        <end position="114"/>
    </location>
</feature>
<feature type="strand" evidence="3">
    <location>
        <begin position="117"/>
        <end position="128"/>
    </location>
</feature>
<feature type="helix" evidence="3">
    <location>
        <begin position="134"/>
        <end position="152"/>
    </location>
</feature>
<feature type="helix" evidence="3">
    <location>
        <begin position="156"/>
        <end position="158"/>
    </location>
</feature>
<accession>P76270</accession>
<accession>O07976</accession>
<accession>O07978</accession>
<reference key="1">
    <citation type="journal article" date="1996" name="DNA Res.">
        <title>A 460-kb DNA sequence of the Escherichia coli K-12 genome corresponding to the 40.1-50.0 min region on the linkage map.</title>
        <authorList>
            <person name="Itoh T."/>
            <person name="Aiba H."/>
            <person name="Baba T."/>
            <person name="Fujita K."/>
            <person name="Hayashi K."/>
            <person name="Inada T."/>
            <person name="Isono K."/>
            <person name="Kasai H."/>
            <person name="Kimura S."/>
            <person name="Kitakawa M."/>
            <person name="Kitagawa M."/>
            <person name="Makino K."/>
            <person name="Miki T."/>
            <person name="Mizobuchi K."/>
            <person name="Mori H."/>
            <person name="Mori T."/>
            <person name="Motomura K."/>
            <person name="Nakade S."/>
            <person name="Nakamura Y."/>
            <person name="Nashimoto H."/>
            <person name="Nishio Y."/>
            <person name="Oshima T."/>
            <person name="Saito N."/>
            <person name="Sampei G."/>
            <person name="Seki Y."/>
            <person name="Sivasundaram S."/>
            <person name="Tagami H."/>
            <person name="Takeda J."/>
            <person name="Takemoto K."/>
            <person name="Wada C."/>
            <person name="Yamamoto Y."/>
            <person name="Horiuchi T."/>
        </authorList>
    </citation>
    <scope>NUCLEOTIDE SEQUENCE [LARGE SCALE GENOMIC DNA]</scope>
    <source>
        <strain>K12 / W3110 / ATCC 27325 / DSM 5911</strain>
    </source>
</reference>
<reference key="2">
    <citation type="journal article" date="1997" name="Science">
        <title>The complete genome sequence of Escherichia coli K-12.</title>
        <authorList>
            <person name="Blattner F.R."/>
            <person name="Plunkett G. III"/>
            <person name="Bloch C.A."/>
            <person name="Perna N.T."/>
            <person name="Burland V."/>
            <person name="Riley M."/>
            <person name="Collado-Vides J."/>
            <person name="Glasner J.D."/>
            <person name="Rode C.K."/>
            <person name="Mayhew G.F."/>
            <person name="Gregor J."/>
            <person name="Davis N.W."/>
            <person name="Kirkpatrick H.A."/>
            <person name="Goeden M.A."/>
            <person name="Rose D.J."/>
            <person name="Mau B."/>
            <person name="Shao Y."/>
        </authorList>
    </citation>
    <scope>NUCLEOTIDE SEQUENCE [LARGE SCALE GENOMIC DNA]</scope>
    <source>
        <strain>K12 / MG1655 / ATCC 47076</strain>
    </source>
</reference>
<reference key="3">
    <citation type="journal article" date="2006" name="Mol. Syst. Biol.">
        <title>Highly accurate genome sequences of Escherichia coli K-12 strains MG1655 and W3110.</title>
        <authorList>
            <person name="Hayashi K."/>
            <person name="Morooka N."/>
            <person name="Yamamoto Y."/>
            <person name="Fujita K."/>
            <person name="Isono K."/>
            <person name="Choi S."/>
            <person name="Ohtsubo E."/>
            <person name="Baba T."/>
            <person name="Wanner B.L."/>
            <person name="Mori H."/>
            <person name="Horiuchi T."/>
        </authorList>
    </citation>
    <scope>NUCLEOTIDE SEQUENCE [LARGE SCALE GENOMIC DNA]</scope>
    <source>
        <strain>K12 / W3110 / ATCC 27325 / DSM 5911</strain>
    </source>
</reference>
<reference key="4">
    <citation type="journal article" date="1999" name="Electrophoresis">
        <title>Enrichment of low abundance proteins of Escherichia coli by hydroxyapatite chromatography.</title>
        <authorList>
            <person name="Fountoulakis M."/>
            <person name="Takacs M.-F."/>
            <person name="Berndt P."/>
            <person name="Langen H."/>
            <person name="Takacs B."/>
        </authorList>
    </citation>
    <scope>IDENTIFICATION BY MASS SPECTROMETRY</scope>
    <source>
        <strain>B / BL21</strain>
    </source>
</reference>
<reference key="5">
    <citation type="journal article" date="2007" name="Proc. Natl. Acad. Sci. U.S.A.">
        <title>Free methionine-(R)-sulfoxide reductase from Escherichia coli reveals a new GAF domain function.</title>
        <authorList>
            <person name="Lin Z."/>
            <person name="Johnson L.C."/>
            <person name="Weissbach H."/>
            <person name="Brot N."/>
            <person name="Lively M.O."/>
            <person name="Lowther W.T."/>
        </authorList>
    </citation>
    <scope>IDENTIFICATION BY MASS SPECTROMETRY</scope>
    <scope>FUNCTION</scope>
    <scope>CATALYTIC ACTIVITY</scope>
    <scope>BIOPHYSICOCHEMICAL PROPERTIES</scope>
    <source>
        <strain>K12 / JM109 / ATCC 53323</strain>
    </source>
</reference>
<reference key="6">
    <citation type="journal article" date="2005" name="Proteins">
        <title>Structural analysis of a set of proteins resulting from a bacterial genomics project.</title>
        <authorList>
            <person name="Badger J."/>
            <person name="Sauder J.M."/>
            <person name="Adams J.M."/>
            <person name="Antonysamy S."/>
            <person name="Bain K."/>
            <person name="Bergseid M.G."/>
            <person name="Buchanan S.G."/>
            <person name="Buchanan M.D."/>
            <person name="Batiyenko Y."/>
            <person name="Christopher J.A."/>
            <person name="Emtage S."/>
            <person name="Eroshkina A."/>
            <person name="Feil I."/>
            <person name="Furlong E.B."/>
            <person name="Gajiwala K.S."/>
            <person name="Gao X."/>
            <person name="He D."/>
            <person name="Hendle J."/>
            <person name="Huber A."/>
            <person name="Hoda K."/>
            <person name="Kearins P."/>
            <person name="Kissinger C."/>
            <person name="Laubert B."/>
            <person name="Lewis H.A."/>
            <person name="Lin J."/>
            <person name="Loomis K."/>
            <person name="Lorimer D."/>
            <person name="Louie G."/>
            <person name="Maletic M."/>
            <person name="Marsh C.D."/>
            <person name="Miller I."/>
            <person name="Molinari J."/>
            <person name="Muller-Dieckmann H.J."/>
            <person name="Newman J.M."/>
            <person name="Noland B.W."/>
            <person name="Pagarigan B."/>
            <person name="Park F."/>
            <person name="Peat T.S."/>
            <person name="Post K.W."/>
            <person name="Radojicic S."/>
            <person name="Ramos A."/>
            <person name="Romero R."/>
            <person name="Rutter M.E."/>
            <person name="Sanderson W.E."/>
            <person name="Schwinn K.D."/>
            <person name="Tresser J."/>
            <person name="Winhoven J."/>
            <person name="Wright T.A."/>
            <person name="Wu L."/>
            <person name="Xu J."/>
            <person name="Harris T.J.R."/>
        </authorList>
    </citation>
    <scope>X-RAY CRYSTALLOGRAPHY (2.1 ANGSTROMS)</scope>
</reference>